<keyword id="KW-1003">Cell membrane</keyword>
<keyword id="KW-0472">Membrane</keyword>
<keyword id="KW-1185">Reference proteome</keyword>
<keyword id="KW-0812">Transmembrane</keyword>
<keyword id="KW-1133">Transmembrane helix</keyword>
<organism>
    <name type="scientific">Gallus gallus</name>
    <name type="common">Chicken</name>
    <dbReference type="NCBI Taxonomy" id="9031"/>
    <lineage>
        <taxon>Eukaryota</taxon>
        <taxon>Metazoa</taxon>
        <taxon>Chordata</taxon>
        <taxon>Craniata</taxon>
        <taxon>Vertebrata</taxon>
        <taxon>Euteleostomi</taxon>
        <taxon>Archelosauria</taxon>
        <taxon>Archosauria</taxon>
        <taxon>Dinosauria</taxon>
        <taxon>Saurischia</taxon>
        <taxon>Theropoda</taxon>
        <taxon>Coelurosauria</taxon>
        <taxon>Aves</taxon>
        <taxon>Neognathae</taxon>
        <taxon>Galloanserae</taxon>
        <taxon>Galliformes</taxon>
        <taxon>Phasianidae</taxon>
        <taxon>Phasianinae</taxon>
        <taxon>Gallus</taxon>
    </lineage>
</organism>
<evidence type="ECO:0000250" key="1">
    <source>
        <dbReference type="UniProtKB" id="Q14CX5"/>
    </source>
</evidence>
<evidence type="ECO:0000305" key="2"/>
<dbReference type="EMBL" id="AJ720089">
    <property type="protein sequence ID" value="CAG31748.1"/>
    <property type="molecule type" value="mRNA"/>
</dbReference>
<dbReference type="RefSeq" id="NP_001026403.1">
    <property type="nucleotide sequence ID" value="NM_001031232.1"/>
</dbReference>
<dbReference type="SMR" id="Q5ZKJ5"/>
<dbReference type="FunCoup" id="Q5ZKJ5">
    <property type="interactions" value="80"/>
</dbReference>
<dbReference type="STRING" id="9031.ENSGALP00000066747"/>
<dbReference type="PaxDb" id="9031-ENSGALP00000013030"/>
<dbReference type="GeneID" id="423861"/>
<dbReference type="KEGG" id="gga:423861"/>
<dbReference type="CTD" id="79847"/>
<dbReference type="VEuPathDB" id="HostDB:geneid_423861"/>
<dbReference type="eggNOG" id="ENOG502QSW5">
    <property type="taxonomic scope" value="Eukaryota"/>
</dbReference>
<dbReference type="HOGENOM" id="CLU_034985_0_0_1"/>
<dbReference type="InParanoid" id="Q5ZKJ5"/>
<dbReference type="OrthoDB" id="62987at2759"/>
<dbReference type="PhylomeDB" id="Q5ZKJ5"/>
<dbReference type="TreeFam" id="TF313122"/>
<dbReference type="PRO" id="PR:Q5ZKJ5"/>
<dbReference type="Proteomes" id="UP000000539">
    <property type="component" value="Unassembled WGS sequence"/>
</dbReference>
<dbReference type="GO" id="GO:0005886">
    <property type="term" value="C:plasma membrane"/>
    <property type="evidence" value="ECO:0000250"/>
    <property type="project" value="UniProtKB"/>
</dbReference>
<dbReference type="CDD" id="cd17481">
    <property type="entry name" value="MFS_MFSD13A"/>
    <property type="match status" value="1"/>
</dbReference>
<dbReference type="Gene3D" id="1.20.1250.20">
    <property type="entry name" value="MFS general substrate transporter like domains"/>
    <property type="match status" value="1"/>
</dbReference>
<dbReference type="InterPro" id="IPR036259">
    <property type="entry name" value="MFS_trans_sf"/>
</dbReference>
<dbReference type="InterPro" id="IPR040035">
    <property type="entry name" value="TMEM180"/>
</dbReference>
<dbReference type="PANTHER" id="PTHR28658">
    <property type="entry name" value="TRANSMEMBRANE PROTEIN 180"/>
    <property type="match status" value="1"/>
</dbReference>
<dbReference type="PANTHER" id="PTHR28658:SF3">
    <property type="entry name" value="TRANSMEMBRANE PROTEIN 180"/>
    <property type="match status" value="1"/>
</dbReference>
<dbReference type="Pfam" id="PF13347">
    <property type="entry name" value="MFS_2"/>
    <property type="match status" value="1"/>
</dbReference>
<dbReference type="SUPFAM" id="SSF103473">
    <property type="entry name" value="MFS general substrate transporter"/>
    <property type="match status" value="1"/>
</dbReference>
<comment type="subcellular location">
    <subcellularLocation>
        <location evidence="1">Cell membrane</location>
        <topology evidence="1">Multi-pass membrane protein</topology>
    </subcellularLocation>
</comment>
<name>MF13A_CHICK</name>
<protein>
    <recommendedName>
        <fullName evidence="1">Transmembrane protein 180</fullName>
    </recommendedName>
    <alternativeName>
        <fullName evidence="1">Major facilitator superfamily domain-containing 13A</fullName>
    </alternativeName>
</protein>
<proteinExistence type="evidence at transcript level"/>
<accession>Q5ZKJ5</accession>
<feature type="chain" id="PRO_0000256226" description="Transmembrane protein 180">
    <location>
        <begin position="1"/>
        <end position="509"/>
    </location>
</feature>
<feature type="topological domain" description="Extracellular" evidence="2">
    <location>
        <begin position="1"/>
        <end position="10"/>
    </location>
</feature>
<feature type="transmembrane region" description="Helical" evidence="1">
    <location>
        <begin position="11"/>
        <end position="42"/>
    </location>
</feature>
<feature type="topological domain" description="Cytoplasmic" evidence="2">
    <location>
        <begin position="43"/>
        <end position="54"/>
    </location>
</feature>
<feature type="transmembrane region" description="Helical" evidence="1">
    <location>
        <begin position="55"/>
        <end position="73"/>
    </location>
</feature>
<feature type="topological domain" description="Extracellular" evidence="2">
    <location>
        <begin position="74"/>
        <end position="98"/>
    </location>
</feature>
<feature type="transmembrane region" description="Helical" evidence="1">
    <location>
        <begin position="99"/>
        <end position="116"/>
    </location>
</feature>
<feature type="topological domain" description="Cytoplasmic" evidence="2">
    <location>
        <begin position="117"/>
        <end position="124"/>
    </location>
</feature>
<feature type="transmembrane region" description="Helical" evidence="1">
    <location>
        <begin position="125"/>
        <end position="149"/>
    </location>
</feature>
<feature type="topological domain" description="Extracellular" evidence="2">
    <location>
        <begin position="150"/>
        <end position="153"/>
    </location>
</feature>
<feature type="transmembrane region" description="Helical" evidence="1">
    <location>
        <begin position="154"/>
        <end position="177"/>
    </location>
</feature>
<feature type="topological domain" description="Cytoplasmic" evidence="2">
    <location>
        <begin position="178"/>
        <end position="189"/>
    </location>
</feature>
<feature type="transmembrane region" description="Helical" evidence="1">
    <location>
        <begin position="190"/>
        <end position="221"/>
    </location>
</feature>
<feature type="topological domain" description="Extracellular" evidence="2">
    <location>
        <begin position="222"/>
        <end position="259"/>
    </location>
</feature>
<feature type="transmembrane region" description="Helical" evidence="1">
    <location>
        <begin position="260"/>
        <end position="287"/>
    </location>
</feature>
<feature type="topological domain" description="Cytoplasmic" evidence="2">
    <location>
        <begin position="288"/>
        <end position="300"/>
    </location>
</feature>
<feature type="transmembrane region" description="Helical" evidence="1">
    <location>
        <begin position="301"/>
        <end position="320"/>
    </location>
</feature>
<feature type="topological domain" description="Extracellular" evidence="2">
    <location>
        <begin position="321"/>
        <end position="325"/>
    </location>
</feature>
<feature type="transmembrane region" description="Helical" evidence="1">
    <location>
        <begin position="326"/>
        <end position="345"/>
    </location>
</feature>
<feature type="topological domain" description="Cytoplasmic" evidence="2">
    <location>
        <begin position="346"/>
        <end position="353"/>
    </location>
</feature>
<feature type="transmembrane region" description="Helical" evidence="1">
    <location>
        <begin position="354"/>
        <end position="388"/>
    </location>
</feature>
<feature type="topological domain" description="Extracellular" evidence="2">
    <location>
        <begin position="389"/>
        <end position="397"/>
    </location>
</feature>
<feature type="transmembrane region" description="Helical" evidence="1">
    <location>
        <begin position="398"/>
        <end position="424"/>
    </location>
</feature>
<feature type="topological domain" description="Cytoplasmic" evidence="2">
    <location>
        <begin position="425"/>
        <end position="458"/>
    </location>
</feature>
<feature type="transmembrane region" description="Helical" evidence="1">
    <location>
        <begin position="459"/>
        <end position="477"/>
    </location>
</feature>
<feature type="topological domain" description="Extracellular" evidence="2">
    <location>
        <begin position="478"/>
        <end position="509"/>
    </location>
</feature>
<gene>
    <name evidence="1" type="primary">MFSD13A</name>
    <name evidence="1" type="synonym">TMEM180</name>
    <name type="ORF">RCJMB04_10g6</name>
</gene>
<reference key="1">
    <citation type="journal article" date="2005" name="Genome Biol.">
        <title>Full-length cDNAs from chicken bursal lymphocytes to facilitate gene function analysis.</title>
        <authorList>
            <person name="Caldwell R.B."/>
            <person name="Kierzek A.M."/>
            <person name="Arakawa H."/>
            <person name="Bezzubov Y."/>
            <person name="Zaim J."/>
            <person name="Fiedler P."/>
            <person name="Kutter S."/>
            <person name="Blagodatski A."/>
            <person name="Kostovska D."/>
            <person name="Koter M."/>
            <person name="Plachy J."/>
            <person name="Carninci P."/>
            <person name="Hayashizaki Y."/>
            <person name="Buerstedde J.-M."/>
        </authorList>
    </citation>
    <scope>NUCLEOTIDE SEQUENCE [LARGE SCALE MRNA]</scope>
    <source>
        <strain>CB</strain>
        <tissue>Bursa of Fabricius</tissue>
    </source>
</reference>
<sequence>MGLRLLACLFHLPTAVIYGSLSLFVSILHNVFLLYYVDTFVSVYKIDKLSFWIGETVFLIWNSLNDPLFGWLSDRVFLSTQQPGAEISSPEVVLKRLRALSHNGPLFAISFLAFWVAWAHPGLQFLLCLCMYDSFLTMVDLHHNALLADLAVSAKDRTSLNFYCSFFSAIGSLSVFMSYAVWNKEDFFSFRIFCIVLAFCSIVGFTLSTQLLRQRFETDGKAKWDQESTLKELYIEKLSVPQEKRITLVEYLQQLSRHRNFLWFVCMNLIQVFHCHFNSNFFPLFLEHLLSDKISVSTGSFLLGISYIAPHLNNLYFLSLCRRWGVYAVVRGLFFLKLALSVVMLLAGPDQVYLLCIFIASNRVFTEGTCKLLNLVVTDLVDEDLVLNRRKQAASALLFGMVALVTKPGQTFAPLIGTWLLCVYTGYDIFQRNPLSNVVSAQPKLESDTILEPTLRQGCFYLLVFVPITCALLQLLSWTQFSLHGKRLQMVKAQRQGLMQGRAPEIKMI</sequence>